<comment type="function">
    <text evidence="2">Transaldolase is important for the balance of metabolites in the pentose-phosphate pathway.</text>
</comment>
<comment type="catalytic activity">
    <reaction evidence="2">
        <text>D-sedoheptulose 7-phosphate + D-glyceraldehyde 3-phosphate = D-erythrose 4-phosphate + beta-D-fructose 6-phosphate</text>
        <dbReference type="Rhea" id="RHEA:17053"/>
        <dbReference type="ChEBI" id="CHEBI:16897"/>
        <dbReference type="ChEBI" id="CHEBI:57483"/>
        <dbReference type="ChEBI" id="CHEBI:57634"/>
        <dbReference type="ChEBI" id="CHEBI:59776"/>
        <dbReference type="EC" id="2.2.1.2"/>
    </reaction>
</comment>
<comment type="pathway">
    <text evidence="2">Carbohydrate degradation; pentose phosphate pathway; D-glyceraldehyde 3-phosphate and beta-D-fructose 6-phosphate from D-ribose 5-phosphate and D-xylulose 5-phosphate (non-oxidative stage): step 2/3.</text>
</comment>
<comment type="subunit">
    <text evidence="1">Homodimer.</text>
</comment>
<comment type="subcellular location">
    <subcellularLocation>
        <location evidence="2">Cytoplasm</location>
    </subcellularLocation>
</comment>
<comment type="similarity">
    <text evidence="2">Belongs to the transaldolase family. Type 1 subfamily.</text>
</comment>
<keyword id="KW-0963">Cytoplasm</keyword>
<keyword id="KW-0570">Pentose shunt</keyword>
<keyword id="KW-0704">Schiff base</keyword>
<keyword id="KW-0808">Transferase</keyword>
<gene>
    <name evidence="2" type="primary">tal</name>
    <name type="ordered locus">Bcen2424_2335</name>
</gene>
<protein>
    <recommendedName>
        <fullName evidence="2">Transaldolase</fullName>
        <ecNumber evidence="2">2.2.1.2</ecNumber>
    </recommendedName>
</protein>
<name>TAL_BURCH</name>
<dbReference type="EC" id="2.2.1.2" evidence="2"/>
<dbReference type="EMBL" id="CP000458">
    <property type="protein sequence ID" value="ABK09086.1"/>
    <property type="molecule type" value="Genomic_DNA"/>
</dbReference>
<dbReference type="RefSeq" id="WP_011545873.1">
    <property type="nucleotide sequence ID" value="NC_008542.1"/>
</dbReference>
<dbReference type="SMR" id="A0K9A9"/>
<dbReference type="KEGG" id="bch:Bcen2424_2335"/>
<dbReference type="HOGENOM" id="CLU_047470_0_1_4"/>
<dbReference type="UniPathway" id="UPA00115">
    <property type="reaction ID" value="UER00414"/>
</dbReference>
<dbReference type="GO" id="GO:0005737">
    <property type="term" value="C:cytoplasm"/>
    <property type="evidence" value="ECO:0007669"/>
    <property type="project" value="UniProtKB-SubCell"/>
</dbReference>
<dbReference type="GO" id="GO:0004801">
    <property type="term" value="F:transaldolase activity"/>
    <property type="evidence" value="ECO:0000250"/>
    <property type="project" value="UniProtKB"/>
</dbReference>
<dbReference type="GO" id="GO:0005975">
    <property type="term" value="P:carbohydrate metabolic process"/>
    <property type="evidence" value="ECO:0007669"/>
    <property type="project" value="InterPro"/>
</dbReference>
<dbReference type="GO" id="GO:0006098">
    <property type="term" value="P:pentose-phosphate shunt"/>
    <property type="evidence" value="ECO:0007669"/>
    <property type="project" value="UniProtKB-UniRule"/>
</dbReference>
<dbReference type="CDD" id="cd00957">
    <property type="entry name" value="Transaldolase_TalAB"/>
    <property type="match status" value="1"/>
</dbReference>
<dbReference type="FunFam" id="3.20.20.70:FF:000002">
    <property type="entry name" value="Transaldolase"/>
    <property type="match status" value="1"/>
</dbReference>
<dbReference type="Gene3D" id="3.20.20.70">
    <property type="entry name" value="Aldolase class I"/>
    <property type="match status" value="1"/>
</dbReference>
<dbReference type="HAMAP" id="MF_00492">
    <property type="entry name" value="Transaldolase_1"/>
    <property type="match status" value="1"/>
</dbReference>
<dbReference type="InterPro" id="IPR013785">
    <property type="entry name" value="Aldolase_TIM"/>
</dbReference>
<dbReference type="InterPro" id="IPR001585">
    <property type="entry name" value="TAL/FSA"/>
</dbReference>
<dbReference type="InterPro" id="IPR004730">
    <property type="entry name" value="Transaldolase_1"/>
</dbReference>
<dbReference type="InterPro" id="IPR018225">
    <property type="entry name" value="Transaldolase_AS"/>
</dbReference>
<dbReference type="NCBIfam" id="NF009001">
    <property type="entry name" value="PRK12346.1"/>
    <property type="match status" value="1"/>
</dbReference>
<dbReference type="NCBIfam" id="TIGR00874">
    <property type="entry name" value="talAB"/>
    <property type="match status" value="1"/>
</dbReference>
<dbReference type="PANTHER" id="PTHR10683">
    <property type="entry name" value="TRANSALDOLASE"/>
    <property type="match status" value="1"/>
</dbReference>
<dbReference type="PANTHER" id="PTHR10683:SF18">
    <property type="entry name" value="TRANSALDOLASE"/>
    <property type="match status" value="1"/>
</dbReference>
<dbReference type="Pfam" id="PF00923">
    <property type="entry name" value="TAL_FSA"/>
    <property type="match status" value="1"/>
</dbReference>
<dbReference type="SUPFAM" id="SSF51569">
    <property type="entry name" value="Aldolase"/>
    <property type="match status" value="1"/>
</dbReference>
<dbReference type="PROSITE" id="PS01054">
    <property type="entry name" value="TRANSALDOLASE_1"/>
    <property type="match status" value="1"/>
</dbReference>
<dbReference type="PROSITE" id="PS00958">
    <property type="entry name" value="TRANSALDOLASE_2"/>
    <property type="match status" value="1"/>
</dbReference>
<accession>A0K9A9</accession>
<sequence>MTTALDQLKQYTTVVADTGDFQQLAQYKPQDATTNPSLILKAVQKDAYKPILEKTVRDHRNESTDFIIDRLLIAFGTEILKLIPGRVSTEVDARLSFDTQRSIEKGRELIKLYEAAGIGRERILIKLASTWEGIRAAEVLQKEGIKCNMTLLFSLVQAAACAEAGAQLISPFVGRIYDWYKKQAGAEWNEARDGGANDPGVQSVRRIYTYYKTFGYKTEVMGASFRTTSQITELAGCDLLTISPDLLQKLQESNETVARKLSPETLQDKPAERVAIDEASFRFQLNDEAMATEKLAEGIRVFAADAVKLEKLIDALR</sequence>
<evidence type="ECO:0000250" key="1"/>
<evidence type="ECO:0000255" key="2">
    <source>
        <dbReference type="HAMAP-Rule" id="MF_00492"/>
    </source>
</evidence>
<reference key="1">
    <citation type="submission" date="2006-08" db="EMBL/GenBank/DDBJ databases">
        <title>Complete sequence of chromosome 1 of Burkholderia cenocepacia HI2424.</title>
        <authorList>
            <person name="Copeland A."/>
            <person name="Lucas S."/>
            <person name="Lapidus A."/>
            <person name="Barry K."/>
            <person name="Detter J.C."/>
            <person name="Glavina del Rio T."/>
            <person name="Hammon N."/>
            <person name="Israni S."/>
            <person name="Pitluck S."/>
            <person name="Chain P."/>
            <person name="Malfatti S."/>
            <person name="Shin M."/>
            <person name="Vergez L."/>
            <person name="Schmutz J."/>
            <person name="Larimer F."/>
            <person name="Land M."/>
            <person name="Hauser L."/>
            <person name="Kyrpides N."/>
            <person name="Kim E."/>
            <person name="LiPuma J.J."/>
            <person name="Gonzalez C.F."/>
            <person name="Konstantinidis K."/>
            <person name="Tiedje J.M."/>
            <person name="Richardson P."/>
        </authorList>
    </citation>
    <scope>NUCLEOTIDE SEQUENCE [LARGE SCALE GENOMIC DNA]</scope>
    <source>
        <strain>HI2424</strain>
    </source>
</reference>
<feature type="chain" id="PRO_1000014488" description="Transaldolase">
    <location>
        <begin position="1"/>
        <end position="317"/>
    </location>
</feature>
<feature type="active site" description="Schiff-base intermediate with substrate" evidence="2">
    <location>
        <position position="126"/>
    </location>
</feature>
<organism>
    <name type="scientific">Burkholderia cenocepacia (strain HI2424)</name>
    <dbReference type="NCBI Taxonomy" id="331272"/>
    <lineage>
        <taxon>Bacteria</taxon>
        <taxon>Pseudomonadati</taxon>
        <taxon>Pseudomonadota</taxon>
        <taxon>Betaproteobacteria</taxon>
        <taxon>Burkholderiales</taxon>
        <taxon>Burkholderiaceae</taxon>
        <taxon>Burkholderia</taxon>
        <taxon>Burkholderia cepacia complex</taxon>
    </lineage>
</organism>
<proteinExistence type="inferred from homology"/>